<sequence>TPTHDFMRF</sequence>
<proteinExistence type="evidence at protein level"/>
<reference evidence="4" key="1">
    <citation type="journal article" date="2009" name="Gen. Comp. Endocrinol.">
        <title>Extended FMRFamides in dipteran insects: conservative expression in the neuroendocrine system is accompanied by rapid sequence evolution.</title>
        <authorList>
            <person name="Rahman M.M."/>
            <person name="Fromm B."/>
            <person name="Neupert S."/>
            <person name="Kreusch S."/>
            <person name="Predel R."/>
        </authorList>
    </citation>
    <scope>PROTEIN SEQUENCE</scope>
    <scope>MASS SPECTROMETRY</scope>
    <scope>AMIDATION AT PHE-9</scope>
    <source>
        <tissue evidence="2">Thoracic ganglionic sheath</tissue>
    </source>
</reference>
<evidence type="ECO:0000255" key="1"/>
<evidence type="ECO:0000269" key="2">
    <source>
    </source>
</evidence>
<evidence type="ECO:0000303" key="3">
    <source>
    </source>
</evidence>
<evidence type="ECO:0000305" key="4"/>
<organism>
    <name type="scientific">Sarcophaga bullata</name>
    <name type="common">Grey flesh fly</name>
    <name type="synonym">Neobellieria bullata</name>
    <dbReference type="NCBI Taxonomy" id="7385"/>
    <lineage>
        <taxon>Eukaryota</taxon>
        <taxon>Metazoa</taxon>
        <taxon>Ecdysozoa</taxon>
        <taxon>Arthropoda</taxon>
        <taxon>Hexapoda</taxon>
        <taxon>Insecta</taxon>
        <taxon>Pterygota</taxon>
        <taxon>Neoptera</taxon>
        <taxon>Endopterygota</taxon>
        <taxon>Diptera</taxon>
        <taxon>Brachycera</taxon>
        <taxon>Muscomorpha</taxon>
        <taxon>Oestroidea</taxon>
        <taxon>Sarcophagidae</taxon>
        <taxon>Sarcophaga</taxon>
        <taxon>Neobellieria</taxon>
    </lineage>
</organism>
<protein>
    <recommendedName>
        <fullName>FMRFamide-6</fullName>
    </recommendedName>
    <alternativeName>
        <fullName evidence="3">SabFMRFamide-6</fullName>
    </alternativeName>
</protein>
<accession>P85479</accession>
<name>FAR6_SARBU</name>
<feature type="peptide" id="PRO_0000371765" description="FMRFamide-6">
    <location>
        <begin position="1"/>
        <end position="9"/>
    </location>
</feature>
<feature type="modified residue" description="Phenylalanine amide" evidence="2">
    <location>
        <position position="9"/>
    </location>
</feature>
<dbReference type="GO" id="GO:0005576">
    <property type="term" value="C:extracellular region"/>
    <property type="evidence" value="ECO:0007669"/>
    <property type="project" value="UniProtKB-SubCell"/>
</dbReference>
<dbReference type="GO" id="GO:0007218">
    <property type="term" value="P:neuropeptide signaling pathway"/>
    <property type="evidence" value="ECO:0007669"/>
    <property type="project" value="UniProtKB-KW"/>
</dbReference>
<comment type="subcellular location">
    <subcellularLocation>
        <location evidence="4">Secreted</location>
    </subcellularLocation>
</comment>
<comment type="mass spectrometry"/>
<comment type="similarity">
    <text evidence="1">Belongs to the FARP (FMRFamide related peptide) family.</text>
</comment>
<keyword id="KW-0027">Amidation</keyword>
<keyword id="KW-0903">Direct protein sequencing</keyword>
<keyword id="KW-0527">Neuropeptide</keyword>
<keyword id="KW-0964">Secreted</keyword>